<comment type="function">
    <text evidence="1">Catalyzes the oxidation of 3-carboxy-2-hydroxy-4-methylpentanoate (3-isopropylmalate) to 3-carboxy-4-methyl-2-oxopentanoate. The product decarboxylates to 4-methyl-2 oxopentanoate.</text>
</comment>
<comment type="catalytic activity">
    <reaction evidence="1">
        <text>(2R,3S)-3-isopropylmalate + NAD(+) = 4-methyl-2-oxopentanoate + CO2 + NADH</text>
        <dbReference type="Rhea" id="RHEA:32271"/>
        <dbReference type="ChEBI" id="CHEBI:16526"/>
        <dbReference type="ChEBI" id="CHEBI:17865"/>
        <dbReference type="ChEBI" id="CHEBI:35121"/>
        <dbReference type="ChEBI" id="CHEBI:57540"/>
        <dbReference type="ChEBI" id="CHEBI:57945"/>
        <dbReference type="EC" id="1.1.1.85"/>
    </reaction>
</comment>
<comment type="cofactor">
    <cofactor evidence="1">
        <name>Mg(2+)</name>
        <dbReference type="ChEBI" id="CHEBI:18420"/>
    </cofactor>
    <cofactor evidence="1">
        <name>Mn(2+)</name>
        <dbReference type="ChEBI" id="CHEBI:29035"/>
    </cofactor>
    <text evidence="1">Binds 1 Mg(2+) or Mn(2+) ion per subunit.</text>
</comment>
<comment type="pathway">
    <text evidence="1">Amino-acid biosynthesis; L-leucine biosynthesis; L-leucine from 3-methyl-2-oxobutanoate: step 3/4.</text>
</comment>
<comment type="subunit">
    <text evidence="1">Homodimer.</text>
</comment>
<comment type="subcellular location">
    <subcellularLocation>
        <location evidence="1">Cytoplasm</location>
    </subcellularLocation>
</comment>
<comment type="similarity">
    <text evidence="1">Belongs to the isocitrate and isopropylmalate dehydrogenases family. LeuB type 1 subfamily.</text>
</comment>
<proteinExistence type="inferred from homology"/>
<keyword id="KW-0028">Amino-acid biosynthesis</keyword>
<keyword id="KW-0100">Branched-chain amino acid biosynthesis</keyword>
<keyword id="KW-0963">Cytoplasm</keyword>
<keyword id="KW-0432">Leucine biosynthesis</keyword>
<keyword id="KW-0460">Magnesium</keyword>
<keyword id="KW-0464">Manganese</keyword>
<keyword id="KW-0479">Metal-binding</keyword>
<keyword id="KW-0520">NAD</keyword>
<keyword id="KW-0560">Oxidoreductase</keyword>
<keyword id="KW-1185">Reference proteome</keyword>
<feature type="chain" id="PRO_0000250131" description="3-isopropylmalate dehydrogenase">
    <location>
        <begin position="1"/>
        <end position="369"/>
    </location>
</feature>
<feature type="binding site" evidence="1">
    <location>
        <begin position="77"/>
        <end position="90"/>
    </location>
    <ligand>
        <name>NAD(+)</name>
        <dbReference type="ChEBI" id="CHEBI:57540"/>
    </ligand>
</feature>
<feature type="binding site" evidence="1">
    <location>
        <position position="97"/>
    </location>
    <ligand>
        <name>substrate</name>
    </ligand>
</feature>
<feature type="binding site" evidence="1">
    <location>
        <position position="107"/>
    </location>
    <ligand>
        <name>substrate</name>
    </ligand>
</feature>
<feature type="binding site" evidence="1">
    <location>
        <position position="135"/>
    </location>
    <ligand>
        <name>substrate</name>
    </ligand>
</feature>
<feature type="binding site" evidence="1">
    <location>
        <position position="226"/>
    </location>
    <ligand>
        <name>Mg(2+)</name>
        <dbReference type="ChEBI" id="CHEBI:18420"/>
    </ligand>
</feature>
<feature type="binding site" evidence="1">
    <location>
        <position position="226"/>
    </location>
    <ligand>
        <name>substrate</name>
    </ligand>
</feature>
<feature type="binding site" evidence="1">
    <location>
        <position position="250"/>
    </location>
    <ligand>
        <name>Mg(2+)</name>
        <dbReference type="ChEBI" id="CHEBI:18420"/>
    </ligand>
</feature>
<feature type="binding site" evidence="1">
    <location>
        <position position="254"/>
    </location>
    <ligand>
        <name>Mg(2+)</name>
        <dbReference type="ChEBI" id="CHEBI:18420"/>
    </ligand>
</feature>
<feature type="binding site" evidence="1">
    <location>
        <begin position="289"/>
        <end position="301"/>
    </location>
    <ligand>
        <name>NAD(+)</name>
        <dbReference type="ChEBI" id="CHEBI:57540"/>
    </ligand>
</feature>
<feature type="site" description="Important for catalysis" evidence="1">
    <location>
        <position position="142"/>
    </location>
</feature>
<feature type="site" description="Important for catalysis" evidence="1">
    <location>
        <position position="193"/>
    </location>
</feature>
<name>LEU3_CERS4</name>
<organism>
    <name type="scientific">Cereibacter sphaeroides (strain ATCC 17023 / DSM 158 / JCM 6121 / CCUG 31486 / LMG 2827 / NBRC 12203 / NCIMB 8253 / ATH 2.4.1.)</name>
    <name type="common">Rhodobacter sphaeroides</name>
    <dbReference type="NCBI Taxonomy" id="272943"/>
    <lineage>
        <taxon>Bacteria</taxon>
        <taxon>Pseudomonadati</taxon>
        <taxon>Pseudomonadota</taxon>
        <taxon>Alphaproteobacteria</taxon>
        <taxon>Rhodobacterales</taxon>
        <taxon>Paracoccaceae</taxon>
        <taxon>Cereibacter</taxon>
    </lineage>
</organism>
<accession>Q3IZJ3</accession>
<sequence length="369" mass="39911">MANPSLLILAGDGIGPEVMAEVKRIIGWFGEKRGVSFDVSEDLVGGAAYDAHGTPLADETMARAQEVDAVLLGAVGGPKYDVLDFSVKPERGLLRLRKEMDLYANLRPAQCFDALADFSSLKRDIVAGLDIMIVRELTSGVYFGEPRGIFPDNEGGRFGVNTQRYTTEEIRRVARSAFELARRRNNRVCSMEKANVMESGILWREEVQWVHDNEYPDVELSHMYADNGAMQLVRWPRQFDVIVTDNLFGDILSDCAAMLTGSLGMLPSASLGAPMANGRPKALYEPVHGSAPDIAGQGKANPIACILSFAMALRYSFDMGEEATRLEKAVETVLADGVRTADLMGPEGGTPVSTSGMGDAVLAALDASL</sequence>
<dbReference type="EC" id="1.1.1.85" evidence="1"/>
<dbReference type="EMBL" id="CP000143">
    <property type="protein sequence ID" value="ABA80041.2"/>
    <property type="molecule type" value="Genomic_DNA"/>
</dbReference>
<dbReference type="RefSeq" id="WP_017139959.1">
    <property type="nucleotide sequence ID" value="NC_007493.2"/>
</dbReference>
<dbReference type="RefSeq" id="YP_353942.4">
    <property type="nucleotide sequence ID" value="NC_007493.2"/>
</dbReference>
<dbReference type="SMR" id="Q3IZJ3"/>
<dbReference type="STRING" id="272943.RSP_0859"/>
<dbReference type="EnsemblBacteria" id="ABA80041">
    <property type="protein sequence ID" value="ABA80041"/>
    <property type="gene ID" value="RSP_0859"/>
</dbReference>
<dbReference type="GeneID" id="3718212"/>
<dbReference type="KEGG" id="rsp:RSP_0859"/>
<dbReference type="PATRIC" id="fig|272943.9.peg.2823"/>
<dbReference type="eggNOG" id="COG0473">
    <property type="taxonomic scope" value="Bacteria"/>
</dbReference>
<dbReference type="OrthoDB" id="9767905at2"/>
<dbReference type="UniPathway" id="UPA00048">
    <property type="reaction ID" value="UER00072"/>
</dbReference>
<dbReference type="Proteomes" id="UP000002703">
    <property type="component" value="Chromosome 1"/>
</dbReference>
<dbReference type="GO" id="GO:0005829">
    <property type="term" value="C:cytosol"/>
    <property type="evidence" value="ECO:0007669"/>
    <property type="project" value="TreeGrafter"/>
</dbReference>
<dbReference type="GO" id="GO:0003862">
    <property type="term" value="F:3-isopropylmalate dehydrogenase activity"/>
    <property type="evidence" value="ECO:0007669"/>
    <property type="project" value="UniProtKB-UniRule"/>
</dbReference>
<dbReference type="GO" id="GO:0000287">
    <property type="term" value="F:magnesium ion binding"/>
    <property type="evidence" value="ECO:0007669"/>
    <property type="project" value="InterPro"/>
</dbReference>
<dbReference type="GO" id="GO:0051287">
    <property type="term" value="F:NAD binding"/>
    <property type="evidence" value="ECO:0007669"/>
    <property type="project" value="InterPro"/>
</dbReference>
<dbReference type="GO" id="GO:0009098">
    <property type="term" value="P:L-leucine biosynthetic process"/>
    <property type="evidence" value="ECO:0007669"/>
    <property type="project" value="UniProtKB-UniRule"/>
</dbReference>
<dbReference type="FunFam" id="3.40.718.10:FF:000006">
    <property type="entry name" value="3-isopropylmalate dehydrogenase"/>
    <property type="match status" value="1"/>
</dbReference>
<dbReference type="Gene3D" id="3.40.718.10">
    <property type="entry name" value="Isopropylmalate Dehydrogenase"/>
    <property type="match status" value="1"/>
</dbReference>
<dbReference type="HAMAP" id="MF_01033">
    <property type="entry name" value="LeuB_type1"/>
    <property type="match status" value="1"/>
</dbReference>
<dbReference type="InterPro" id="IPR019818">
    <property type="entry name" value="IsoCit/isopropylmalate_DH_CS"/>
</dbReference>
<dbReference type="InterPro" id="IPR024084">
    <property type="entry name" value="IsoPropMal-DH-like_dom"/>
</dbReference>
<dbReference type="InterPro" id="IPR004429">
    <property type="entry name" value="Isopropylmalate_DH"/>
</dbReference>
<dbReference type="NCBIfam" id="TIGR00169">
    <property type="entry name" value="leuB"/>
    <property type="match status" value="1"/>
</dbReference>
<dbReference type="PANTHER" id="PTHR42979">
    <property type="entry name" value="3-ISOPROPYLMALATE DEHYDROGENASE"/>
    <property type="match status" value="1"/>
</dbReference>
<dbReference type="PANTHER" id="PTHR42979:SF1">
    <property type="entry name" value="3-ISOPROPYLMALATE DEHYDROGENASE"/>
    <property type="match status" value="1"/>
</dbReference>
<dbReference type="Pfam" id="PF00180">
    <property type="entry name" value="Iso_dh"/>
    <property type="match status" value="1"/>
</dbReference>
<dbReference type="SMART" id="SM01329">
    <property type="entry name" value="Iso_dh"/>
    <property type="match status" value="1"/>
</dbReference>
<dbReference type="SUPFAM" id="SSF53659">
    <property type="entry name" value="Isocitrate/Isopropylmalate dehydrogenase-like"/>
    <property type="match status" value="1"/>
</dbReference>
<dbReference type="PROSITE" id="PS00470">
    <property type="entry name" value="IDH_IMDH"/>
    <property type="match status" value="1"/>
</dbReference>
<gene>
    <name evidence="1" type="primary">leuB</name>
    <name type="ordered locus">RHOS4_24730</name>
    <name type="ORF">RSP_0859</name>
</gene>
<reference key="1">
    <citation type="submission" date="2005-09" db="EMBL/GenBank/DDBJ databases">
        <title>Complete sequence of chromosome 1 of Rhodobacter sphaeroides 2.4.1.</title>
        <authorList>
            <person name="Copeland A."/>
            <person name="Lucas S."/>
            <person name="Lapidus A."/>
            <person name="Barry K."/>
            <person name="Detter J.C."/>
            <person name="Glavina T."/>
            <person name="Hammon N."/>
            <person name="Israni S."/>
            <person name="Pitluck S."/>
            <person name="Richardson P."/>
            <person name="Mackenzie C."/>
            <person name="Choudhary M."/>
            <person name="Larimer F."/>
            <person name="Hauser L.J."/>
            <person name="Land M."/>
            <person name="Donohue T.J."/>
            <person name="Kaplan S."/>
        </authorList>
    </citation>
    <scope>NUCLEOTIDE SEQUENCE [LARGE SCALE GENOMIC DNA]</scope>
    <source>
        <strain>ATCC 17023 / DSM 158 / JCM 6121 / CCUG 31486 / LMG 2827 / NBRC 12203 / NCIMB 8253 / ATH 2.4.1.</strain>
    </source>
</reference>
<protein>
    <recommendedName>
        <fullName evidence="1">3-isopropylmalate dehydrogenase</fullName>
        <ecNumber evidence="1">1.1.1.85</ecNumber>
    </recommendedName>
    <alternativeName>
        <fullName evidence="1">3-IPM-DH</fullName>
    </alternativeName>
    <alternativeName>
        <fullName evidence="1">Beta-IPM dehydrogenase</fullName>
        <shortName evidence="1">IMDH</shortName>
    </alternativeName>
</protein>
<evidence type="ECO:0000255" key="1">
    <source>
        <dbReference type="HAMAP-Rule" id="MF_01033"/>
    </source>
</evidence>